<feature type="chain" id="PRO_0000338507" description="DNA mismatch repair protein MSH3">
    <location>
        <begin position="1"/>
        <end position="1032"/>
    </location>
</feature>
<feature type="region of interest" description="Disordered" evidence="3">
    <location>
        <begin position="1"/>
        <end position="59"/>
    </location>
</feature>
<feature type="region of interest" description="Mispair-binding domain" evidence="1">
    <location>
        <begin position="136"/>
        <end position="262"/>
    </location>
</feature>
<feature type="compositionally biased region" description="Basic and acidic residues" evidence="3">
    <location>
        <begin position="18"/>
        <end position="29"/>
    </location>
</feature>
<feature type="binding site" evidence="2">
    <location>
        <begin position="796"/>
        <end position="803"/>
    </location>
    <ligand>
        <name>ATP</name>
        <dbReference type="ChEBI" id="CHEBI:30616"/>
    </ligand>
</feature>
<organism>
    <name type="scientific">Eremothecium gossypii (strain ATCC 10895 / CBS 109.51 / FGSC 9923 / NRRL Y-1056)</name>
    <name type="common">Yeast</name>
    <name type="synonym">Ashbya gossypii</name>
    <dbReference type="NCBI Taxonomy" id="284811"/>
    <lineage>
        <taxon>Eukaryota</taxon>
        <taxon>Fungi</taxon>
        <taxon>Dikarya</taxon>
        <taxon>Ascomycota</taxon>
        <taxon>Saccharomycotina</taxon>
        <taxon>Saccharomycetes</taxon>
        <taxon>Saccharomycetales</taxon>
        <taxon>Saccharomycetaceae</taxon>
        <taxon>Eremothecium</taxon>
    </lineage>
</organism>
<evidence type="ECO:0000250" key="1"/>
<evidence type="ECO:0000255" key="2"/>
<evidence type="ECO:0000256" key="3">
    <source>
        <dbReference type="SAM" id="MobiDB-lite"/>
    </source>
</evidence>
<evidence type="ECO:0000305" key="4"/>
<dbReference type="EMBL" id="AE016817">
    <property type="protein sequence ID" value="AAS52089.1"/>
    <property type="molecule type" value="Genomic_DNA"/>
</dbReference>
<dbReference type="RefSeq" id="NP_984265.1">
    <property type="nucleotide sequence ID" value="NM_209618.1"/>
</dbReference>
<dbReference type="SMR" id="Q759V4"/>
<dbReference type="FunCoup" id="Q759V4">
    <property type="interactions" value="852"/>
</dbReference>
<dbReference type="STRING" id="284811.Q759V4"/>
<dbReference type="EnsemblFungi" id="AAS52089">
    <property type="protein sequence ID" value="AAS52089"/>
    <property type="gene ID" value="AGOS_ADR168C"/>
</dbReference>
<dbReference type="GeneID" id="4620427"/>
<dbReference type="KEGG" id="ago:AGOS_ADR168C"/>
<dbReference type="eggNOG" id="KOG0218">
    <property type="taxonomic scope" value="Eukaryota"/>
</dbReference>
<dbReference type="HOGENOM" id="CLU_002472_0_0_1"/>
<dbReference type="InParanoid" id="Q759V4"/>
<dbReference type="OMA" id="INMHAAR"/>
<dbReference type="OrthoDB" id="121051at2759"/>
<dbReference type="Proteomes" id="UP000000591">
    <property type="component" value="Chromosome IV"/>
</dbReference>
<dbReference type="GO" id="GO:0032302">
    <property type="term" value="C:MutSbeta complex"/>
    <property type="evidence" value="ECO:0007669"/>
    <property type="project" value="EnsemblFungi"/>
</dbReference>
<dbReference type="GO" id="GO:0005634">
    <property type="term" value="C:nucleus"/>
    <property type="evidence" value="ECO:0000318"/>
    <property type="project" value="GO_Central"/>
</dbReference>
<dbReference type="GO" id="GO:0005524">
    <property type="term" value="F:ATP binding"/>
    <property type="evidence" value="ECO:0007669"/>
    <property type="project" value="UniProtKB-KW"/>
</dbReference>
<dbReference type="GO" id="GO:0140664">
    <property type="term" value="F:ATP-dependent DNA damage sensor activity"/>
    <property type="evidence" value="ECO:0007669"/>
    <property type="project" value="InterPro"/>
</dbReference>
<dbReference type="GO" id="GO:0000406">
    <property type="term" value="F:double-strand/single-strand DNA junction binding"/>
    <property type="evidence" value="ECO:0007669"/>
    <property type="project" value="EnsemblFungi"/>
</dbReference>
<dbReference type="GO" id="GO:0003690">
    <property type="term" value="F:double-stranded DNA binding"/>
    <property type="evidence" value="ECO:0000318"/>
    <property type="project" value="GO_Central"/>
</dbReference>
<dbReference type="GO" id="GO:0000404">
    <property type="term" value="F:heteroduplex DNA loop binding"/>
    <property type="evidence" value="ECO:0007669"/>
    <property type="project" value="EnsemblFungi"/>
</dbReference>
<dbReference type="GO" id="GO:0000403">
    <property type="term" value="F:Y-form DNA binding"/>
    <property type="evidence" value="ECO:0007669"/>
    <property type="project" value="EnsemblFungi"/>
</dbReference>
<dbReference type="GO" id="GO:0000710">
    <property type="term" value="P:meiotic mismatch repair"/>
    <property type="evidence" value="ECO:0007669"/>
    <property type="project" value="EnsemblFungi"/>
</dbReference>
<dbReference type="GO" id="GO:0006298">
    <property type="term" value="P:mismatch repair"/>
    <property type="evidence" value="ECO:0000318"/>
    <property type="project" value="GO_Central"/>
</dbReference>
<dbReference type="GO" id="GO:0006312">
    <property type="term" value="P:mitotic recombination"/>
    <property type="evidence" value="ECO:0000318"/>
    <property type="project" value="GO_Central"/>
</dbReference>
<dbReference type="GO" id="GO:0000735">
    <property type="term" value="P:removal of nonhomologous ends"/>
    <property type="evidence" value="ECO:0007669"/>
    <property type="project" value="EnsemblFungi"/>
</dbReference>
<dbReference type="GO" id="GO:0043111">
    <property type="term" value="P:replication fork arrest"/>
    <property type="evidence" value="ECO:0007669"/>
    <property type="project" value="EnsemblFungi"/>
</dbReference>
<dbReference type="FunFam" id="3.40.50.300:FF:003735">
    <property type="entry name" value="DNA mismatch repair protein MSH3"/>
    <property type="match status" value="1"/>
</dbReference>
<dbReference type="Gene3D" id="1.10.1420.10">
    <property type="match status" value="2"/>
</dbReference>
<dbReference type="Gene3D" id="3.40.1170.10">
    <property type="entry name" value="DNA repair protein MutS, domain I"/>
    <property type="match status" value="1"/>
</dbReference>
<dbReference type="Gene3D" id="3.30.420.110">
    <property type="entry name" value="MutS, connector domain"/>
    <property type="match status" value="1"/>
</dbReference>
<dbReference type="Gene3D" id="3.40.50.300">
    <property type="entry name" value="P-loop containing nucleotide triphosphate hydrolases"/>
    <property type="match status" value="1"/>
</dbReference>
<dbReference type="InterPro" id="IPR007695">
    <property type="entry name" value="DNA_mismatch_repair_MutS-lik_N"/>
</dbReference>
<dbReference type="InterPro" id="IPR017261">
    <property type="entry name" value="DNA_mismatch_repair_MutS/MSH"/>
</dbReference>
<dbReference type="InterPro" id="IPR000432">
    <property type="entry name" value="DNA_mismatch_repair_MutS_C"/>
</dbReference>
<dbReference type="InterPro" id="IPR007696">
    <property type="entry name" value="DNA_mismatch_repair_MutS_core"/>
</dbReference>
<dbReference type="InterPro" id="IPR016151">
    <property type="entry name" value="DNA_mismatch_repair_MutS_N"/>
</dbReference>
<dbReference type="InterPro" id="IPR036187">
    <property type="entry name" value="DNA_mismatch_repair_MutS_sf"/>
</dbReference>
<dbReference type="InterPro" id="IPR007860">
    <property type="entry name" value="DNA_mmatch_repair_MutS_con_dom"/>
</dbReference>
<dbReference type="InterPro" id="IPR045076">
    <property type="entry name" value="MutS"/>
</dbReference>
<dbReference type="InterPro" id="IPR036678">
    <property type="entry name" value="MutS_con_dom_sf"/>
</dbReference>
<dbReference type="InterPro" id="IPR027417">
    <property type="entry name" value="P-loop_NTPase"/>
</dbReference>
<dbReference type="NCBIfam" id="NF003810">
    <property type="entry name" value="PRK05399.1"/>
    <property type="match status" value="1"/>
</dbReference>
<dbReference type="PANTHER" id="PTHR11361:SF122">
    <property type="entry name" value="DNA MISMATCH REPAIR PROTEIN MSH3"/>
    <property type="match status" value="1"/>
</dbReference>
<dbReference type="PANTHER" id="PTHR11361">
    <property type="entry name" value="DNA MISMATCH REPAIR PROTEIN MUTS FAMILY MEMBER"/>
    <property type="match status" value="1"/>
</dbReference>
<dbReference type="Pfam" id="PF01624">
    <property type="entry name" value="MutS_I"/>
    <property type="match status" value="1"/>
</dbReference>
<dbReference type="Pfam" id="PF05188">
    <property type="entry name" value="MutS_II"/>
    <property type="match status" value="1"/>
</dbReference>
<dbReference type="Pfam" id="PF05192">
    <property type="entry name" value="MutS_III"/>
    <property type="match status" value="1"/>
</dbReference>
<dbReference type="Pfam" id="PF00488">
    <property type="entry name" value="MutS_V"/>
    <property type="match status" value="1"/>
</dbReference>
<dbReference type="PIRSF" id="PIRSF037677">
    <property type="entry name" value="DNA_mis_repair_Msh6"/>
    <property type="match status" value="1"/>
</dbReference>
<dbReference type="SMART" id="SM00534">
    <property type="entry name" value="MUTSac"/>
    <property type="match status" value="1"/>
</dbReference>
<dbReference type="SMART" id="SM00533">
    <property type="entry name" value="MUTSd"/>
    <property type="match status" value="1"/>
</dbReference>
<dbReference type="SUPFAM" id="SSF55271">
    <property type="entry name" value="DNA repair protein MutS, domain I"/>
    <property type="match status" value="1"/>
</dbReference>
<dbReference type="SUPFAM" id="SSF48334">
    <property type="entry name" value="DNA repair protein MutS, domain III"/>
    <property type="match status" value="1"/>
</dbReference>
<dbReference type="SUPFAM" id="SSF52540">
    <property type="entry name" value="P-loop containing nucleoside triphosphate hydrolases"/>
    <property type="match status" value="1"/>
</dbReference>
<dbReference type="PROSITE" id="PS00486">
    <property type="entry name" value="DNA_MISMATCH_REPAIR_2"/>
    <property type="match status" value="1"/>
</dbReference>
<protein>
    <recommendedName>
        <fullName>DNA mismatch repair protein MSH3</fullName>
    </recommendedName>
    <alternativeName>
        <fullName>MutS protein homolog 3</fullName>
    </alternativeName>
</protein>
<keyword id="KW-0067">ATP-binding</keyword>
<keyword id="KW-0227">DNA damage</keyword>
<keyword id="KW-0234">DNA repair</keyword>
<keyword id="KW-0238">DNA-binding</keyword>
<keyword id="KW-0547">Nucleotide-binding</keyword>
<keyword id="KW-0539">Nucleus</keyword>
<keyword id="KW-1185">Reference proteome</keyword>
<proteinExistence type="inferred from homology"/>
<comment type="function">
    <text evidence="1">Component of the post-replicative DNA mismatch repair system (MMR). Heterodimerizes with MSH2 to form MutS beta, which binds to DNA mismatches thereby initiating DNA repair. MSH3 provides substrate-binding and substrate specificity to the complex. When bound, the MutS beta heterodimer bends the DNA helix and shields approximately 20 base pairs. Acts mainly to repair insertion-deletion loops (IDLs) from 2 to 13 nucleotides in size, but can also repair base-base and single insertion-deletion mismatches that occur during replication. After mismatch binding, forms a ternary complex with the MutL alpha heterodimer, which is thought to be responsible for directing the downstream MMR events, including strand discrimination, excision, and resynthesis. ATP binding and hydrolysis play a pivotal role in mismatch repair functions (By similarity).</text>
</comment>
<comment type="subunit">
    <text evidence="1">Heterodimer consisting of MSH2-MSH3 (MutS beta). Forms a ternary complex with MutL alpha (MLH1-PMS1) (By similarity).</text>
</comment>
<comment type="subcellular location">
    <subcellularLocation>
        <location evidence="1">Nucleus</location>
    </subcellularLocation>
</comment>
<comment type="similarity">
    <text evidence="4">Belongs to the DNA mismatch repair MutS family. MSH3 subfamily.</text>
</comment>
<name>MSH3_EREGS</name>
<sequence>MLQQPTISRFFKSSSTRKKSEQRTAKEEAELMQLLESDGENNSATVPSDRKPEAAPMHVGLGNKAAAGGAVPGQVKSATRGFEDFRFNRRREACGKEQEVGFAERLQRIMERREGGCVEEDETELDNEAPRSKRAKPNRLTELDQQFKDLKLQHMDKVLAVRVGYKYKFFAEDAVMVSRVLQIKLVPGKLTVHETDPADHKHKKFAYCTIPDTRLEVHLQRLMHHNLKVGVVEQTETSAVKKNSGTSSSVFSREVTNIFTRATYGINETFGTKDRRVLGDSASVWGLVCKRQPSYTRYFLVSVNLNSGEVIFDDFKEERFLTEALETRIKYTNPSEVVVGDGLGSEIEKVFHTSDSDITLNRIELVGLYEEIFSEPHPAFKGNVPLQTALMLVHGYLTNFKNESLLFFKENFKPFCSKTHMILPSSAIESLDIFENSTDRSSKGSLLWVLDHTRTNYGLRNLKNWIAKPLINIDQIQQRLDAVQCISTEVGNIFIESLNNMLRDGQDLERILNRIAYGKTSRREVYLFLRELTQLATLFSSHHRYIETNVLSANGKIRMQSSLLANIFTDLDEYWKQFPIPNFLAMINIDAALDKNPDRPYVEYFNLTKYDRAEPLISKQQDIEAVIGELRDELKNIRVILKRPMLNYKDEIDFLVEIRNTQVSSVPVDWVKVASTKAVSRFQTPGTAKLVAKLQYHKELLQDLALQEYESFIKRITGEYTSLRKAILHLSTYDCILSLAATSCNVDYVRPKFNTAPQCINVINGRNPIIESLDVRYMPNDVNLNREGKKIMIITGPNMGGKSSYIRQVALLVIMAQIGCYVPAQEAEFSIFDQIFTRIGAYDNLLRNDSTFKIEMTEMVQILRSSTENSLLLLDEVGRGTGTHDGISISYALLRYFIELHNACPLILFITHYASLGSIRSPILGNYHMSYIEEKRPGENWPSVVFLYKLKEGRAHNSYGLNVAKLADIQTGIINRAYKISTMLKQEMESNSSIAAICTIKHALAGNSAASLKSAIETLIESADHEQFVLNM</sequence>
<reference key="1">
    <citation type="journal article" date="2004" name="Science">
        <title>The Ashbya gossypii genome as a tool for mapping the ancient Saccharomyces cerevisiae genome.</title>
        <authorList>
            <person name="Dietrich F.S."/>
            <person name="Voegeli S."/>
            <person name="Brachat S."/>
            <person name="Lerch A."/>
            <person name="Gates K."/>
            <person name="Steiner S."/>
            <person name="Mohr C."/>
            <person name="Poehlmann R."/>
            <person name="Luedi P."/>
            <person name="Choi S."/>
            <person name="Wing R.A."/>
            <person name="Flavier A."/>
            <person name="Gaffney T.D."/>
            <person name="Philippsen P."/>
        </authorList>
    </citation>
    <scope>NUCLEOTIDE SEQUENCE [LARGE SCALE GENOMIC DNA]</scope>
    <source>
        <strain>ATCC 10895 / CBS 109.51 / FGSC 9923 / NRRL Y-1056</strain>
    </source>
</reference>
<reference key="2">
    <citation type="journal article" date="2013" name="G3 (Bethesda)">
        <title>Genomes of Ashbya fungi isolated from insects reveal four mating-type loci, numerous translocations, lack of transposons, and distinct gene duplications.</title>
        <authorList>
            <person name="Dietrich F.S."/>
            <person name="Voegeli S."/>
            <person name="Kuo S."/>
            <person name="Philippsen P."/>
        </authorList>
    </citation>
    <scope>GENOME REANNOTATION</scope>
    <source>
        <strain>ATCC 10895 / CBS 109.51 / FGSC 9923 / NRRL Y-1056</strain>
    </source>
</reference>
<gene>
    <name type="primary">MSH3</name>
    <name type="ordered locus">ADR168C</name>
</gene>
<accession>Q759V4</accession>